<feature type="chain" id="PRO_0000108305" description="Cytochrome c">
    <location>
        <begin position="1"/>
        <end position="111"/>
    </location>
</feature>
<feature type="binding site" description="covalent">
    <location>
        <position position="22"/>
    </location>
    <ligand>
        <name>heme c</name>
        <dbReference type="ChEBI" id="CHEBI:61717"/>
    </ligand>
</feature>
<feature type="binding site" description="covalent">
    <location>
        <position position="25"/>
    </location>
    <ligand>
        <name>heme c</name>
        <dbReference type="ChEBI" id="CHEBI:61717"/>
    </ligand>
</feature>
<feature type="binding site" description="axial binding residue">
    <location>
        <position position="26"/>
    </location>
    <ligand>
        <name>heme c</name>
        <dbReference type="ChEBI" id="CHEBI:61717"/>
    </ligand>
    <ligandPart>
        <name>Fe</name>
        <dbReference type="ChEBI" id="CHEBI:18248"/>
    </ligandPart>
</feature>
<feature type="binding site" description="axial binding residue">
    <location>
        <position position="88"/>
    </location>
    <ligand>
        <name>heme c</name>
        <dbReference type="ChEBI" id="CHEBI:61717"/>
    </ligand>
    <ligandPart>
        <name>Fe</name>
        <dbReference type="ChEBI" id="CHEBI:18248"/>
    </ligandPart>
</feature>
<feature type="modified residue" description="N-acetylalanine" evidence="1">
    <location>
        <position position="1"/>
    </location>
</feature>
<feature type="modified residue" description="N6,N6,N6-trimethyllysine" evidence="1">
    <location>
        <position position="80"/>
    </location>
</feature>
<feature type="modified residue" description="N6,N6,N6-trimethyllysine" evidence="1">
    <location>
        <position position="94"/>
    </location>
</feature>
<accession>P00052</accession>
<comment type="function">
    <text>Electron carrier protein. The oxidized form of the cytochrome c heme group can accept an electron from the heme group of the cytochrome c1 subunit of cytochrome reductase. Cytochrome c then transfers this electron to the cytochrome oxidase complex, the final protein carrier in the mitochondrial electron-transport chain.</text>
</comment>
<comment type="subcellular location">
    <subcellularLocation>
        <location>Mitochondrion intermembrane space</location>
    </subcellularLocation>
    <text>Loosely associated with the inner membrane.</text>
</comment>
<comment type="PTM">
    <text>Binds 1 heme c group covalently per subunit.</text>
</comment>
<comment type="similarity">
    <text evidence="2">Belongs to the cytochrome c family.</text>
</comment>
<comment type="online information" name="Protein Spotlight">
    <link uri="https://www.proteinspotlight.org/back_issues/076"/>
    <text>Life shuttle - Issue 76 of November 2006</text>
</comment>
<protein>
    <recommendedName>
        <fullName>Cytochrome c</fullName>
    </recommendedName>
</protein>
<dbReference type="PIR" id="A00045">
    <property type="entry name" value="CCMB"/>
</dbReference>
<dbReference type="SMR" id="P00052"/>
<dbReference type="STRING" id="3916.P00052"/>
<dbReference type="iPTMnet" id="P00052"/>
<dbReference type="Proteomes" id="UP000087766">
    <property type="component" value="Unplaced"/>
</dbReference>
<dbReference type="GO" id="GO:0005758">
    <property type="term" value="C:mitochondrial intermembrane space"/>
    <property type="evidence" value="ECO:0007669"/>
    <property type="project" value="UniProtKB-SubCell"/>
</dbReference>
<dbReference type="GO" id="GO:0009055">
    <property type="term" value="F:electron transfer activity"/>
    <property type="evidence" value="ECO:0007669"/>
    <property type="project" value="InterPro"/>
</dbReference>
<dbReference type="GO" id="GO:0020037">
    <property type="term" value="F:heme binding"/>
    <property type="evidence" value="ECO:0007669"/>
    <property type="project" value="InterPro"/>
</dbReference>
<dbReference type="GO" id="GO:0046872">
    <property type="term" value="F:metal ion binding"/>
    <property type="evidence" value="ECO:0007669"/>
    <property type="project" value="UniProtKB-KW"/>
</dbReference>
<dbReference type="FunFam" id="1.10.760.10:FF:000001">
    <property type="entry name" value="Cytochrome c iso-1"/>
    <property type="match status" value="1"/>
</dbReference>
<dbReference type="Gene3D" id="1.10.760.10">
    <property type="entry name" value="Cytochrome c-like domain"/>
    <property type="match status" value="1"/>
</dbReference>
<dbReference type="InterPro" id="IPR009056">
    <property type="entry name" value="Cyt_c-like_dom"/>
</dbReference>
<dbReference type="InterPro" id="IPR036909">
    <property type="entry name" value="Cyt_c-like_dom_sf"/>
</dbReference>
<dbReference type="InterPro" id="IPR002327">
    <property type="entry name" value="Cyt_c_1A/1B"/>
</dbReference>
<dbReference type="PANTHER" id="PTHR11961">
    <property type="entry name" value="CYTOCHROME C"/>
    <property type="match status" value="1"/>
</dbReference>
<dbReference type="Pfam" id="PF00034">
    <property type="entry name" value="Cytochrom_C"/>
    <property type="match status" value="1"/>
</dbReference>
<dbReference type="PRINTS" id="PR00604">
    <property type="entry name" value="CYTCHRMECIAB"/>
</dbReference>
<dbReference type="SUPFAM" id="SSF46626">
    <property type="entry name" value="Cytochrome c"/>
    <property type="match status" value="1"/>
</dbReference>
<dbReference type="PROSITE" id="PS51007">
    <property type="entry name" value="CYTC"/>
    <property type="match status" value="1"/>
</dbReference>
<keyword id="KW-0007">Acetylation</keyword>
<keyword id="KW-0903">Direct protein sequencing</keyword>
<keyword id="KW-0249">Electron transport</keyword>
<keyword id="KW-0349">Heme</keyword>
<keyword id="KW-0408">Iron</keyword>
<keyword id="KW-0479">Metal-binding</keyword>
<keyword id="KW-0488">Methylation</keyword>
<keyword id="KW-0496">Mitochondrion</keyword>
<keyword id="KW-1185">Reference proteome</keyword>
<keyword id="KW-0679">Respiratory chain</keyword>
<keyword id="KW-0813">Transport</keyword>
<sequence length="111" mass="12132">ASFDEAPPGNSKSGEKIFKTKCAQCHTVDKGAGHKQGPNLNGLFGRQSGTTAGYSYSTANKNMAVIWEEKTLYDYLLNPKKYIPGTKMVFPGLKKPQDRADLIAYLKESTA</sequence>
<proteinExistence type="evidence at protein level"/>
<organism>
    <name type="scientific">Vigna radiata var. radiata</name>
    <name type="common">Mung bean</name>
    <name type="synonym">Phaseolus aureus</name>
    <dbReference type="NCBI Taxonomy" id="3916"/>
    <lineage>
        <taxon>Eukaryota</taxon>
        <taxon>Viridiplantae</taxon>
        <taxon>Streptophyta</taxon>
        <taxon>Embryophyta</taxon>
        <taxon>Tracheophyta</taxon>
        <taxon>Spermatophyta</taxon>
        <taxon>Magnoliopsida</taxon>
        <taxon>eudicotyledons</taxon>
        <taxon>Gunneridae</taxon>
        <taxon>Pentapetalae</taxon>
        <taxon>rosids</taxon>
        <taxon>fabids</taxon>
        <taxon>Fabales</taxon>
        <taxon>Fabaceae</taxon>
        <taxon>Papilionoideae</taxon>
        <taxon>50 kb inversion clade</taxon>
        <taxon>NPAAA clade</taxon>
        <taxon>indigoferoid/millettioid clade</taxon>
        <taxon>Phaseoleae</taxon>
        <taxon>Vigna</taxon>
    </lineage>
</organism>
<name>CYC_VIGRR</name>
<evidence type="ECO:0000269" key="1">
    <source>
    </source>
</evidence>
<evidence type="ECO:0000305" key="2"/>
<reference key="1">
    <citation type="journal article" date="1970" name="Biochem. J.">
        <title>The amino acid sequence of Phaseolus aureua L. (mung-bean) cytochrome c.</title>
        <authorList>
            <person name="Thompson E.W."/>
            <person name="Laycock M.V."/>
            <person name="Ramshaw J.A.M."/>
            <person name="Boulter D."/>
        </authorList>
    </citation>
    <scope>PROTEIN SEQUENCE</scope>
    <scope>ACETYLATION AT ALA-1</scope>
    <scope>METHYLATION AT LYS-80 AND LYS-94</scope>
</reference>
<reference key="2">
    <citation type="submission" date="1970-08" db="PIR data bank">
        <authorList>
            <person name="Thompson E.W."/>
            <person name="Laycock M.V."/>
            <person name="Ramshaw J.A.M."/>
            <person name="Boulter D."/>
        </authorList>
    </citation>
    <scope>SEQUENCE REVISION TO 4; 5 AND 10</scope>
</reference>